<protein>
    <recommendedName>
        <fullName evidence="1">2-C-methyl-D-erythritol 2,4-cyclodiphosphate synthase</fullName>
        <shortName evidence="1">MECDP-synthase</shortName>
        <shortName evidence="1">MECPP-synthase</shortName>
        <shortName evidence="1">MECPS</shortName>
        <ecNumber evidence="1">4.6.1.12</ecNumber>
    </recommendedName>
</protein>
<dbReference type="EC" id="4.6.1.12" evidence="1"/>
<dbReference type="EMBL" id="CP001048">
    <property type="protein sequence ID" value="ACC87789.1"/>
    <property type="molecule type" value="Genomic_DNA"/>
</dbReference>
<dbReference type="RefSeq" id="WP_012413489.1">
    <property type="nucleotide sequence ID" value="NZ_CP009780.1"/>
</dbReference>
<dbReference type="SMR" id="B2K578"/>
<dbReference type="KEGG" id="ypb:YPTS_0805"/>
<dbReference type="PATRIC" id="fig|502801.10.peg.136"/>
<dbReference type="UniPathway" id="UPA00056">
    <property type="reaction ID" value="UER00095"/>
</dbReference>
<dbReference type="GO" id="GO:0008685">
    <property type="term" value="F:2-C-methyl-D-erythritol 2,4-cyclodiphosphate synthase activity"/>
    <property type="evidence" value="ECO:0007669"/>
    <property type="project" value="UniProtKB-UniRule"/>
</dbReference>
<dbReference type="GO" id="GO:0046872">
    <property type="term" value="F:metal ion binding"/>
    <property type="evidence" value="ECO:0007669"/>
    <property type="project" value="UniProtKB-KW"/>
</dbReference>
<dbReference type="GO" id="GO:0019288">
    <property type="term" value="P:isopentenyl diphosphate biosynthetic process, methylerythritol 4-phosphate pathway"/>
    <property type="evidence" value="ECO:0007669"/>
    <property type="project" value="UniProtKB-UniRule"/>
</dbReference>
<dbReference type="GO" id="GO:0016114">
    <property type="term" value="P:terpenoid biosynthetic process"/>
    <property type="evidence" value="ECO:0007669"/>
    <property type="project" value="InterPro"/>
</dbReference>
<dbReference type="CDD" id="cd00554">
    <property type="entry name" value="MECDP_synthase"/>
    <property type="match status" value="1"/>
</dbReference>
<dbReference type="FunFam" id="3.30.1330.50:FF:000001">
    <property type="entry name" value="2-C-methyl-D-erythritol 2,4-cyclodiphosphate synthase"/>
    <property type="match status" value="1"/>
</dbReference>
<dbReference type="Gene3D" id="3.30.1330.50">
    <property type="entry name" value="2-C-methyl-D-erythritol 2,4-cyclodiphosphate synthase"/>
    <property type="match status" value="1"/>
</dbReference>
<dbReference type="HAMAP" id="MF_00107">
    <property type="entry name" value="IspF"/>
    <property type="match status" value="1"/>
</dbReference>
<dbReference type="InterPro" id="IPR003526">
    <property type="entry name" value="MECDP_synthase"/>
</dbReference>
<dbReference type="InterPro" id="IPR020555">
    <property type="entry name" value="MECDP_synthase_CS"/>
</dbReference>
<dbReference type="InterPro" id="IPR036571">
    <property type="entry name" value="MECDP_synthase_sf"/>
</dbReference>
<dbReference type="NCBIfam" id="TIGR00151">
    <property type="entry name" value="ispF"/>
    <property type="match status" value="1"/>
</dbReference>
<dbReference type="PANTHER" id="PTHR43181">
    <property type="entry name" value="2-C-METHYL-D-ERYTHRITOL 2,4-CYCLODIPHOSPHATE SYNTHASE, CHLOROPLASTIC"/>
    <property type="match status" value="1"/>
</dbReference>
<dbReference type="PANTHER" id="PTHR43181:SF1">
    <property type="entry name" value="2-C-METHYL-D-ERYTHRITOL 2,4-CYCLODIPHOSPHATE SYNTHASE, CHLOROPLASTIC"/>
    <property type="match status" value="1"/>
</dbReference>
<dbReference type="Pfam" id="PF02542">
    <property type="entry name" value="YgbB"/>
    <property type="match status" value="1"/>
</dbReference>
<dbReference type="SUPFAM" id="SSF69765">
    <property type="entry name" value="IpsF-like"/>
    <property type="match status" value="1"/>
</dbReference>
<dbReference type="PROSITE" id="PS01350">
    <property type="entry name" value="ISPF"/>
    <property type="match status" value="1"/>
</dbReference>
<accession>B2K578</accession>
<reference key="1">
    <citation type="submission" date="2008-04" db="EMBL/GenBank/DDBJ databases">
        <title>Complete sequence of Yersinia pseudotuberculosis PB1/+.</title>
        <authorList>
            <person name="Copeland A."/>
            <person name="Lucas S."/>
            <person name="Lapidus A."/>
            <person name="Glavina del Rio T."/>
            <person name="Dalin E."/>
            <person name="Tice H."/>
            <person name="Bruce D."/>
            <person name="Goodwin L."/>
            <person name="Pitluck S."/>
            <person name="Munk A.C."/>
            <person name="Brettin T."/>
            <person name="Detter J.C."/>
            <person name="Han C."/>
            <person name="Tapia R."/>
            <person name="Schmutz J."/>
            <person name="Larimer F."/>
            <person name="Land M."/>
            <person name="Hauser L."/>
            <person name="Challacombe J.F."/>
            <person name="Green L."/>
            <person name="Lindler L.E."/>
            <person name="Nikolich M.P."/>
            <person name="Richardson P."/>
        </authorList>
    </citation>
    <scope>NUCLEOTIDE SEQUENCE [LARGE SCALE GENOMIC DNA]</scope>
    <source>
        <strain>PB1/+</strain>
    </source>
</reference>
<feature type="chain" id="PRO_1000094298" description="2-C-methyl-D-erythritol 2,4-cyclodiphosphate synthase">
    <location>
        <begin position="1"/>
        <end position="162"/>
    </location>
</feature>
<feature type="binding site" evidence="1">
    <location>
        <begin position="8"/>
        <end position="10"/>
    </location>
    <ligand>
        <name>4-CDP-2-C-methyl-D-erythritol 2-phosphate</name>
        <dbReference type="ChEBI" id="CHEBI:57919"/>
    </ligand>
</feature>
<feature type="binding site" evidence="1">
    <location>
        <position position="8"/>
    </location>
    <ligand>
        <name>a divalent metal cation</name>
        <dbReference type="ChEBI" id="CHEBI:60240"/>
    </ligand>
</feature>
<feature type="binding site" evidence="1">
    <location>
        <position position="10"/>
    </location>
    <ligand>
        <name>a divalent metal cation</name>
        <dbReference type="ChEBI" id="CHEBI:60240"/>
    </ligand>
</feature>
<feature type="binding site" evidence="1">
    <location>
        <begin position="36"/>
        <end position="37"/>
    </location>
    <ligand>
        <name>4-CDP-2-C-methyl-D-erythritol 2-phosphate</name>
        <dbReference type="ChEBI" id="CHEBI:57919"/>
    </ligand>
</feature>
<feature type="binding site" evidence="1">
    <location>
        <position position="44"/>
    </location>
    <ligand>
        <name>a divalent metal cation</name>
        <dbReference type="ChEBI" id="CHEBI:60240"/>
    </ligand>
</feature>
<feature type="binding site" evidence="1">
    <location>
        <begin position="58"/>
        <end position="60"/>
    </location>
    <ligand>
        <name>4-CDP-2-C-methyl-D-erythritol 2-phosphate</name>
        <dbReference type="ChEBI" id="CHEBI:57919"/>
    </ligand>
</feature>
<feature type="binding site" evidence="1">
    <location>
        <begin position="63"/>
        <end position="67"/>
    </location>
    <ligand>
        <name>4-CDP-2-C-methyl-D-erythritol 2-phosphate</name>
        <dbReference type="ChEBI" id="CHEBI:57919"/>
    </ligand>
</feature>
<feature type="binding site" evidence="1">
    <location>
        <begin position="102"/>
        <end position="108"/>
    </location>
    <ligand>
        <name>4-CDP-2-C-methyl-D-erythritol 2-phosphate</name>
        <dbReference type="ChEBI" id="CHEBI:57919"/>
    </ligand>
</feature>
<feature type="binding site" evidence="1">
    <location>
        <begin position="134"/>
        <end position="137"/>
    </location>
    <ligand>
        <name>4-CDP-2-C-methyl-D-erythritol 2-phosphate</name>
        <dbReference type="ChEBI" id="CHEBI:57919"/>
    </ligand>
</feature>
<feature type="binding site" evidence="1">
    <location>
        <position position="141"/>
    </location>
    <ligand>
        <name>4-CDP-2-C-methyl-D-erythritol 2-phosphate</name>
        <dbReference type="ChEBI" id="CHEBI:57919"/>
    </ligand>
</feature>
<feature type="binding site" evidence="1">
    <location>
        <position position="144"/>
    </location>
    <ligand>
        <name>4-CDP-2-C-methyl-D-erythritol 2-phosphate</name>
        <dbReference type="ChEBI" id="CHEBI:57919"/>
    </ligand>
</feature>
<feature type="site" description="Transition state stabilizer" evidence="1">
    <location>
        <position position="36"/>
    </location>
</feature>
<feature type="site" description="Transition state stabilizer" evidence="1">
    <location>
        <position position="135"/>
    </location>
</feature>
<organism>
    <name type="scientific">Yersinia pseudotuberculosis serotype IB (strain PB1/+)</name>
    <dbReference type="NCBI Taxonomy" id="502801"/>
    <lineage>
        <taxon>Bacteria</taxon>
        <taxon>Pseudomonadati</taxon>
        <taxon>Pseudomonadota</taxon>
        <taxon>Gammaproteobacteria</taxon>
        <taxon>Enterobacterales</taxon>
        <taxon>Yersiniaceae</taxon>
        <taxon>Yersinia</taxon>
    </lineage>
</organism>
<comment type="function">
    <text evidence="1">Involved in the biosynthesis of isopentenyl diphosphate (IPP) and dimethylallyl diphosphate (DMAPP), two major building blocks of isoprenoid compounds. Catalyzes the conversion of 4-diphosphocytidyl-2-C-methyl-D-erythritol 2-phosphate (CDP-ME2P) to 2-C-methyl-D-erythritol 2,4-cyclodiphosphate (ME-CPP) with a corresponding release of cytidine 5-monophosphate (CMP).</text>
</comment>
<comment type="catalytic activity">
    <reaction evidence="1">
        <text>4-CDP-2-C-methyl-D-erythritol 2-phosphate = 2-C-methyl-D-erythritol 2,4-cyclic diphosphate + CMP</text>
        <dbReference type="Rhea" id="RHEA:23864"/>
        <dbReference type="ChEBI" id="CHEBI:57919"/>
        <dbReference type="ChEBI" id="CHEBI:58483"/>
        <dbReference type="ChEBI" id="CHEBI:60377"/>
        <dbReference type="EC" id="4.6.1.12"/>
    </reaction>
</comment>
<comment type="cofactor">
    <cofactor evidence="1">
        <name>a divalent metal cation</name>
        <dbReference type="ChEBI" id="CHEBI:60240"/>
    </cofactor>
    <text evidence="1">Binds 1 divalent metal cation per subunit.</text>
</comment>
<comment type="pathway">
    <text evidence="1">Isoprenoid biosynthesis; isopentenyl diphosphate biosynthesis via DXP pathway; isopentenyl diphosphate from 1-deoxy-D-xylulose 5-phosphate: step 4/6.</text>
</comment>
<comment type="subunit">
    <text evidence="1">Homotrimer.</text>
</comment>
<comment type="similarity">
    <text evidence="1">Belongs to the IspF family.</text>
</comment>
<evidence type="ECO:0000255" key="1">
    <source>
        <dbReference type="HAMAP-Rule" id="MF_00107"/>
    </source>
</evidence>
<name>ISPF_YERPB</name>
<sequence>MRIGHGFDVHKFGENGSGPLIIGGVRIPYEKGLLAHSDGDVALHAATDALLGAAALGDIGKLFPDTDPAFKGADSRGLLREAYRCILAKGYKLGNLDITIIAQAPKMAPHIPQMRVNLAEDLQCHMDDINVKATTTEQLGFTGRGEGIACEAVVLLVNVEQG</sequence>
<proteinExistence type="inferred from homology"/>
<keyword id="KW-0414">Isoprene biosynthesis</keyword>
<keyword id="KW-0456">Lyase</keyword>
<keyword id="KW-0479">Metal-binding</keyword>
<gene>
    <name evidence="1" type="primary">ispF</name>
    <name type="ordered locus">YPTS_0805</name>
</gene>